<proteinExistence type="inferred from homology"/>
<feature type="chain" id="PRO_1000091623" description="Ribonuclease HII">
    <location>
        <begin position="1"/>
        <end position="207"/>
    </location>
</feature>
<feature type="domain" description="RNase H type-2" evidence="2">
    <location>
        <begin position="10"/>
        <end position="199"/>
    </location>
</feature>
<feature type="binding site" evidence="1">
    <location>
        <position position="16"/>
    </location>
    <ligand>
        <name>a divalent metal cation</name>
        <dbReference type="ChEBI" id="CHEBI:60240"/>
    </ligand>
</feature>
<feature type="binding site" evidence="1">
    <location>
        <position position="17"/>
    </location>
    <ligand>
        <name>a divalent metal cation</name>
        <dbReference type="ChEBI" id="CHEBI:60240"/>
    </ligand>
</feature>
<feature type="binding site" evidence="1">
    <location>
        <position position="108"/>
    </location>
    <ligand>
        <name>a divalent metal cation</name>
        <dbReference type="ChEBI" id="CHEBI:60240"/>
    </ligand>
</feature>
<organism>
    <name type="scientific">Erwinia tasmaniensis (strain DSM 17950 / CFBP 7177 / CIP 109463 / NCPPB 4357 / Et1/99)</name>
    <dbReference type="NCBI Taxonomy" id="465817"/>
    <lineage>
        <taxon>Bacteria</taxon>
        <taxon>Pseudomonadati</taxon>
        <taxon>Pseudomonadota</taxon>
        <taxon>Gammaproteobacteria</taxon>
        <taxon>Enterobacterales</taxon>
        <taxon>Erwiniaceae</taxon>
        <taxon>Erwinia</taxon>
    </lineage>
</organism>
<protein>
    <recommendedName>
        <fullName evidence="1">Ribonuclease HII</fullName>
        <shortName evidence="1">RNase HII</shortName>
        <ecNumber evidence="1">3.1.26.4</ecNumber>
    </recommendedName>
</protein>
<keyword id="KW-0963">Cytoplasm</keyword>
<keyword id="KW-0255">Endonuclease</keyword>
<keyword id="KW-0378">Hydrolase</keyword>
<keyword id="KW-0464">Manganese</keyword>
<keyword id="KW-0479">Metal-binding</keyword>
<keyword id="KW-0540">Nuclease</keyword>
<keyword id="KW-1185">Reference proteome</keyword>
<name>RNH2_ERWT9</name>
<gene>
    <name evidence="1" type="primary">rnhB</name>
    <name type="ordered locus">ETA_09040</name>
</gene>
<comment type="function">
    <text evidence="1">Endonuclease that specifically degrades the RNA of RNA-DNA hybrids.</text>
</comment>
<comment type="catalytic activity">
    <reaction evidence="1">
        <text>Endonucleolytic cleavage to 5'-phosphomonoester.</text>
        <dbReference type="EC" id="3.1.26.4"/>
    </reaction>
</comment>
<comment type="cofactor">
    <cofactor evidence="1">
        <name>Mn(2+)</name>
        <dbReference type="ChEBI" id="CHEBI:29035"/>
    </cofactor>
    <cofactor evidence="1">
        <name>Mg(2+)</name>
        <dbReference type="ChEBI" id="CHEBI:18420"/>
    </cofactor>
    <text evidence="1">Manganese or magnesium. Binds 1 divalent metal ion per monomer in the absence of substrate. May bind a second metal ion after substrate binding.</text>
</comment>
<comment type="subcellular location">
    <subcellularLocation>
        <location evidence="1">Cytoplasm</location>
    </subcellularLocation>
</comment>
<comment type="similarity">
    <text evidence="1">Belongs to the RNase HII family.</text>
</comment>
<reference key="1">
    <citation type="journal article" date="2008" name="Environ. Microbiol.">
        <title>The genome of Erwinia tasmaniensis strain Et1/99, a non-pathogenic bacterium in the genus Erwinia.</title>
        <authorList>
            <person name="Kube M."/>
            <person name="Migdoll A.M."/>
            <person name="Mueller I."/>
            <person name="Kuhl H."/>
            <person name="Beck A."/>
            <person name="Reinhardt R."/>
            <person name="Geider K."/>
        </authorList>
    </citation>
    <scope>NUCLEOTIDE SEQUENCE [LARGE SCALE GENOMIC DNA]</scope>
    <source>
        <strain>DSM 17950 / CFBP 7177 / CIP 109463 / NCPPB 4357 / Et1/99</strain>
    </source>
</reference>
<accession>B2VHY0</accession>
<sequence length="207" mass="22517">MNEFIYPEARLIAGVDEVGRGPLVGAVVTAAVILDPSRPIVGLGDSKKLSEKRRLALYDEIKDKALSWSLGRAEPEEIDQLNILHATMLAMQRAVAGLHLSPDFVLIDGNRCPALAMPSRAVVKGDSLVPEISAASILAKVTRDREMCELDLQYPQYGFARHKGYPTAVHVEKLAQFGATPQHRRSFAPVRNALLDAELAAAVARTL</sequence>
<evidence type="ECO:0000255" key="1">
    <source>
        <dbReference type="HAMAP-Rule" id="MF_00052"/>
    </source>
</evidence>
<evidence type="ECO:0000255" key="2">
    <source>
        <dbReference type="PROSITE-ProRule" id="PRU01319"/>
    </source>
</evidence>
<dbReference type="EC" id="3.1.26.4" evidence="1"/>
<dbReference type="EMBL" id="CU468135">
    <property type="protein sequence ID" value="CAO95950.1"/>
    <property type="molecule type" value="Genomic_DNA"/>
</dbReference>
<dbReference type="RefSeq" id="WP_012440652.1">
    <property type="nucleotide sequence ID" value="NC_010694.1"/>
</dbReference>
<dbReference type="SMR" id="B2VHY0"/>
<dbReference type="STRING" id="465817.ETA_09040"/>
<dbReference type="KEGG" id="eta:ETA_09040"/>
<dbReference type="eggNOG" id="COG0164">
    <property type="taxonomic scope" value="Bacteria"/>
</dbReference>
<dbReference type="HOGENOM" id="CLU_036532_3_2_6"/>
<dbReference type="OrthoDB" id="9803420at2"/>
<dbReference type="Proteomes" id="UP000001726">
    <property type="component" value="Chromosome"/>
</dbReference>
<dbReference type="GO" id="GO:0005737">
    <property type="term" value="C:cytoplasm"/>
    <property type="evidence" value="ECO:0007669"/>
    <property type="project" value="UniProtKB-SubCell"/>
</dbReference>
<dbReference type="GO" id="GO:0032299">
    <property type="term" value="C:ribonuclease H2 complex"/>
    <property type="evidence" value="ECO:0007669"/>
    <property type="project" value="TreeGrafter"/>
</dbReference>
<dbReference type="GO" id="GO:0030145">
    <property type="term" value="F:manganese ion binding"/>
    <property type="evidence" value="ECO:0007669"/>
    <property type="project" value="UniProtKB-UniRule"/>
</dbReference>
<dbReference type="GO" id="GO:0003723">
    <property type="term" value="F:RNA binding"/>
    <property type="evidence" value="ECO:0007669"/>
    <property type="project" value="InterPro"/>
</dbReference>
<dbReference type="GO" id="GO:0004523">
    <property type="term" value="F:RNA-DNA hybrid ribonuclease activity"/>
    <property type="evidence" value="ECO:0007669"/>
    <property type="project" value="UniProtKB-UniRule"/>
</dbReference>
<dbReference type="GO" id="GO:0043137">
    <property type="term" value="P:DNA replication, removal of RNA primer"/>
    <property type="evidence" value="ECO:0007669"/>
    <property type="project" value="TreeGrafter"/>
</dbReference>
<dbReference type="GO" id="GO:0006298">
    <property type="term" value="P:mismatch repair"/>
    <property type="evidence" value="ECO:0007669"/>
    <property type="project" value="TreeGrafter"/>
</dbReference>
<dbReference type="CDD" id="cd07182">
    <property type="entry name" value="RNase_HII_bacteria_HII_like"/>
    <property type="match status" value="1"/>
</dbReference>
<dbReference type="FunFam" id="3.30.420.10:FF:000006">
    <property type="entry name" value="Ribonuclease HII"/>
    <property type="match status" value="1"/>
</dbReference>
<dbReference type="Gene3D" id="3.30.420.10">
    <property type="entry name" value="Ribonuclease H-like superfamily/Ribonuclease H"/>
    <property type="match status" value="1"/>
</dbReference>
<dbReference type="HAMAP" id="MF_00052_B">
    <property type="entry name" value="RNase_HII_B"/>
    <property type="match status" value="1"/>
</dbReference>
<dbReference type="InterPro" id="IPR022898">
    <property type="entry name" value="RNase_HII"/>
</dbReference>
<dbReference type="InterPro" id="IPR001352">
    <property type="entry name" value="RNase_HII/HIII"/>
</dbReference>
<dbReference type="InterPro" id="IPR024567">
    <property type="entry name" value="RNase_HII/HIII_dom"/>
</dbReference>
<dbReference type="InterPro" id="IPR012337">
    <property type="entry name" value="RNaseH-like_sf"/>
</dbReference>
<dbReference type="InterPro" id="IPR036397">
    <property type="entry name" value="RNaseH_sf"/>
</dbReference>
<dbReference type="NCBIfam" id="NF000594">
    <property type="entry name" value="PRK00015.1-1"/>
    <property type="match status" value="1"/>
</dbReference>
<dbReference type="NCBIfam" id="NF000595">
    <property type="entry name" value="PRK00015.1-3"/>
    <property type="match status" value="1"/>
</dbReference>
<dbReference type="NCBIfam" id="NF000596">
    <property type="entry name" value="PRK00015.1-4"/>
    <property type="match status" value="1"/>
</dbReference>
<dbReference type="PANTHER" id="PTHR10954">
    <property type="entry name" value="RIBONUCLEASE H2 SUBUNIT A"/>
    <property type="match status" value="1"/>
</dbReference>
<dbReference type="PANTHER" id="PTHR10954:SF18">
    <property type="entry name" value="RIBONUCLEASE HII"/>
    <property type="match status" value="1"/>
</dbReference>
<dbReference type="Pfam" id="PF01351">
    <property type="entry name" value="RNase_HII"/>
    <property type="match status" value="1"/>
</dbReference>
<dbReference type="SUPFAM" id="SSF53098">
    <property type="entry name" value="Ribonuclease H-like"/>
    <property type="match status" value="1"/>
</dbReference>
<dbReference type="PROSITE" id="PS51975">
    <property type="entry name" value="RNASE_H_2"/>
    <property type="match status" value="1"/>
</dbReference>